<protein>
    <recommendedName>
        <fullName>Midnolin</fullName>
    </recommendedName>
    <alternativeName>
        <fullName>Midbrain nucleolar protein</fullName>
    </alternativeName>
</protein>
<name>MIDN_HUMAN</name>
<sequence length="468" mass="49213">MEPQPGGARSCRRGAPGGACELGPAAEAAPMSLAIHSTTGTRYDLAVPPDETVEGLRKRLSQRLKVPKERLALLHKDTRLSSGKLQEFGVGDGSKLTLVPTVEAGLMSQASRPEQSVMQALESLTETQVSDFLSGRSPLTLALRVGDHMMFVQLQLAAQHAPLQHRHVLAAAAAAAAARGDPSIASPVSSPCRPVSSAARVPPVPTSPSPASPSPITAGSFRSHAASTTCPEQMDCSPTASSSASPGASTTSTPGASPAPRSRKPGAVIESFVNHAPGVFSGTFSGTLHPNCQDSSGRPRRDIGTILQILNDLLSATRHYQGMPPSLAQLRCHAQCSPASPAPDLAPRTTSCEKLTAAPSASLLQGQSQIRMCKPPGDRLRQTENRATRCKVERLQLLLQQKRLRRKARRDARGPYHWSPSRKAGRSDSSSSGGGGSPSEASGLGLDFEDSVWKPEVNPDIKSEFVVA</sequence>
<keyword id="KW-0963">Cytoplasm</keyword>
<keyword id="KW-0539">Nucleus</keyword>
<keyword id="KW-1267">Proteomics identification</keyword>
<keyword id="KW-1185">Reference proteome</keyword>
<proteinExistence type="evidence at protein level"/>
<dbReference type="EMBL" id="BC015089">
    <property type="protein sequence ID" value="AAH15089.2"/>
    <property type="molecule type" value="mRNA"/>
</dbReference>
<dbReference type="EMBL" id="BC094778">
    <property type="protein sequence ID" value="AAH94778.1"/>
    <property type="molecule type" value="mRNA"/>
</dbReference>
<dbReference type="CCDS" id="CCDS32864.1"/>
<dbReference type="RefSeq" id="NP_001375403.1">
    <property type="nucleotide sequence ID" value="NM_001388474.1"/>
</dbReference>
<dbReference type="RefSeq" id="NP_796375.3">
    <property type="nucleotide sequence ID" value="NM_177401.4"/>
</dbReference>
<dbReference type="SMR" id="Q504T8"/>
<dbReference type="BioGRID" id="124652">
    <property type="interactions" value="630"/>
</dbReference>
<dbReference type="FunCoup" id="Q504T8">
    <property type="interactions" value="2570"/>
</dbReference>
<dbReference type="IntAct" id="Q504T8">
    <property type="interactions" value="26"/>
</dbReference>
<dbReference type="MINT" id="Q504T8"/>
<dbReference type="STRING" id="9606.ENSP00000300952"/>
<dbReference type="GlyGen" id="Q504T8">
    <property type="glycosylation" value="2 sites, 1 O-linked glycan (1 site)"/>
</dbReference>
<dbReference type="iPTMnet" id="Q504T8"/>
<dbReference type="PhosphoSitePlus" id="Q504T8"/>
<dbReference type="BioMuta" id="MIDN"/>
<dbReference type="DMDM" id="296437369"/>
<dbReference type="jPOST" id="Q504T8"/>
<dbReference type="MassIVE" id="Q504T8"/>
<dbReference type="PaxDb" id="9606-ENSP00000300952"/>
<dbReference type="PeptideAtlas" id="Q504T8"/>
<dbReference type="ProteomicsDB" id="62403"/>
<dbReference type="Antibodypedia" id="22621">
    <property type="antibodies" value="117 antibodies from 17 providers"/>
</dbReference>
<dbReference type="DNASU" id="90007"/>
<dbReference type="Ensembl" id="ENST00000300952.7">
    <property type="protein sequence ID" value="ENSP00000300952.2"/>
    <property type="gene ID" value="ENSG00000167470.14"/>
</dbReference>
<dbReference type="Ensembl" id="ENST00000591446.7">
    <property type="protein sequence ID" value="ENSP00000467679.1"/>
    <property type="gene ID" value="ENSG00000167470.14"/>
</dbReference>
<dbReference type="GeneID" id="90007"/>
<dbReference type="KEGG" id="hsa:90007"/>
<dbReference type="UCSC" id="uc002lrp.4">
    <property type="organism name" value="human"/>
</dbReference>
<dbReference type="AGR" id="HGNC:16298"/>
<dbReference type="CTD" id="90007"/>
<dbReference type="DisGeNET" id="90007"/>
<dbReference type="GeneCards" id="MIDN"/>
<dbReference type="HGNC" id="HGNC:16298">
    <property type="gene designation" value="MIDN"/>
</dbReference>
<dbReference type="HPA" id="ENSG00000167470">
    <property type="expression patterns" value="Low tissue specificity"/>
</dbReference>
<dbReference type="MIM" id="606700">
    <property type="type" value="gene"/>
</dbReference>
<dbReference type="neXtProt" id="NX_Q504T8"/>
<dbReference type="OpenTargets" id="ENSG00000167470"/>
<dbReference type="PharmGKB" id="PA30818"/>
<dbReference type="VEuPathDB" id="HostDB:ENSG00000167470"/>
<dbReference type="eggNOG" id="ENOG502QTDX">
    <property type="taxonomic scope" value="Eukaryota"/>
</dbReference>
<dbReference type="GeneTree" id="ENSGT00510000049027"/>
<dbReference type="HOGENOM" id="CLU_029882_0_0_1"/>
<dbReference type="InParanoid" id="Q504T8"/>
<dbReference type="OMA" id="PSHDIGQ"/>
<dbReference type="OrthoDB" id="1916003at2759"/>
<dbReference type="PAN-GO" id="Q504T8">
    <property type="GO annotations" value="1 GO annotation based on evolutionary models"/>
</dbReference>
<dbReference type="PhylomeDB" id="Q504T8"/>
<dbReference type="TreeFam" id="TF329735"/>
<dbReference type="PathwayCommons" id="Q504T8"/>
<dbReference type="SignaLink" id="Q504T8"/>
<dbReference type="BioGRID-ORCS" id="90007">
    <property type="hits" value="51 hits in 1166 CRISPR screens"/>
</dbReference>
<dbReference type="ChiTaRS" id="MIDN">
    <property type="organism name" value="human"/>
</dbReference>
<dbReference type="GenomeRNAi" id="90007"/>
<dbReference type="Pharos" id="Q504T8">
    <property type="development level" value="Tbio"/>
</dbReference>
<dbReference type="PRO" id="PR:Q504T8"/>
<dbReference type="Proteomes" id="UP000005640">
    <property type="component" value="Chromosome 19"/>
</dbReference>
<dbReference type="RNAct" id="Q504T8">
    <property type="molecule type" value="protein"/>
</dbReference>
<dbReference type="Bgee" id="ENSG00000167470">
    <property type="expression patterns" value="Expressed in oviduct epithelium and 180 other cell types or tissues"/>
</dbReference>
<dbReference type="ExpressionAtlas" id="Q504T8">
    <property type="expression patterns" value="baseline and differential"/>
</dbReference>
<dbReference type="GO" id="GO:0005737">
    <property type="term" value="C:cytoplasm"/>
    <property type="evidence" value="ECO:0000314"/>
    <property type="project" value="UniProtKB"/>
</dbReference>
<dbReference type="GO" id="GO:0005829">
    <property type="term" value="C:cytosol"/>
    <property type="evidence" value="ECO:0007669"/>
    <property type="project" value="UniProtKB-SubCell"/>
</dbReference>
<dbReference type="GO" id="GO:0005730">
    <property type="term" value="C:nucleolus"/>
    <property type="evidence" value="ECO:0007669"/>
    <property type="project" value="UniProtKB-SubCell"/>
</dbReference>
<dbReference type="GO" id="GO:0005634">
    <property type="term" value="C:nucleus"/>
    <property type="evidence" value="ECO:0000314"/>
    <property type="project" value="UniProtKB"/>
</dbReference>
<dbReference type="GO" id="GO:0019900">
    <property type="term" value="F:kinase binding"/>
    <property type="evidence" value="ECO:0000250"/>
    <property type="project" value="UniProtKB"/>
</dbReference>
<dbReference type="GO" id="GO:0060090">
    <property type="term" value="F:molecular adaptor activity"/>
    <property type="evidence" value="ECO:0000314"/>
    <property type="project" value="UniProtKB"/>
</dbReference>
<dbReference type="GO" id="GO:0033132">
    <property type="term" value="P:negative regulation of glucokinase activity"/>
    <property type="evidence" value="ECO:0000250"/>
    <property type="project" value="UniProtKB"/>
</dbReference>
<dbReference type="GO" id="GO:0046676">
    <property type="term" value="P:negative regulation of insulin secretion"/>
    <property type="evidence" value="ECO:0000250"/>
    <property type="project" value="UniProtKB"/>
</dbReference>
<dbReference type="GO" id="GO:0010499">
    <property type="term" value="P:proteasomal ubiquitin-independent protein catabolic process"/>
    <property type="evidence" value="ECO:0000314"/>
    <property type="project" value="UniProtKB"/>
</dbReference>
<dbReference type="CDD" id="cd01804">
    <property type="entry name" value="Ubl_midnolin"/>
    <property type="match status" value="1"/>
</dbReference>
<dbReference type="FunFam" id="3.10.20.90:FF:000180">
    <property type="entry name" value="midnolin isoform X1"/>
    <property type="match status" value="1"/>
</dbReference>
<dbReference type="Gene3D" id="3.10.20.90">
    <property type="entry name" value="Phosphatidylinositol 3-kinase Catalytic Subunit, Chain A, domain 1"/>
    <property type="match status" value="1"/>
</dbReference>
<dbReference type="InterPro" id="IPR039336">
    <property type="entry name" value="Midnolin"/>
</dbReference>
<dbReference type="InterPro" id="IPR000626">
    <property type="entry name" value="Ubiquitin-like_dom"/>
</dbReference>
<dbReference type="InterPro" id="IPR029071">
    <property type="entry name" value="Ubiquitin-like_domsf"/>
</dbReference>
<dbReference type="PANTHER" id="PTHR23010">
    <property type="entry name" value="MIDNOLIN"/>
    <property type="match status" value="1"/>
</dbReference>
<dbReference type="PANTHER" id="PTHR23010:SF1">
    <property type="entry name" value="MIDNOLIN"/>
    <property type="match status" value="1"/>
</dbReference>
<dbReference type="Pfam" id="PF00240">
    <property type="entry name" value="ubiquitin"/>
    <property type="match status" value="1"/>
</dbReference>
<dbReference type="SMART" id="SM00213">
    <property type="entry name" value="UBQ"/>
    <property type="match status" value="1"/>
</dbReference>
<dbReference type="SUPFAM" id="SSF54236">
    <property type="entry name" value="Ubiquitin-like"/>
    <property type="match status" value="1"/>
</dbReference>
<dbReference type="PROSITE" id="PS50053">
    <property type="entry name" value="UBIQUITIN_2"/>
    <property type="match status" value="1"/>
</dbReference>
<gene>
    <name type="primary">MIDN</name>
</gene>
<organism>
    <name type="scientific">Homo sapiens</name>
    <name type="common">Human</name>
    <dbReference type="NCBI Taxonomy" id="9606"/>
    <lineage>
        <taxon>Eukaryota</taxon>
        <taxon>Metazoa</taxon>
        <taxon>Chordata</taxon>
        <taxon>Craniata</taxon>
        <taxon>Vertebrata</taxon>
        <taxon>Euteleostomi</taxon>
        <taxon>Mammalia</taxon>
        <taxon>Eutheria</taxon>
        <taxon>Euarchontoglires</taxon>
        <taxon>Primates</taxon>
        <taxon>Haplorrhini</taxon>
        <taxon>Catarrhini</taxon>
        <taxon>Hominidae</taxon>
        <taxon>Homo</taxon>
    </lineage>
</organism>
<accession>Q504T8</accession>
<accession>Q96BW8</accession>
<comment type="function">
    <text evidence="1 2 6">Facilitates the ubiquitin-independent proteasomal degradation of stimulus-induced transcription factors such as FOSB, EGR1, NR4A1, and IRF4 to the proteasome for degradation (PubMed:37616343). Promotes also the degradation of other substrates such as CBX4 (By similarity). Plays a role in inhibiting the activity of glucokinase GCK and both glucose-induced and basal insulin secretion.</text>
</comment>
<comment type="subunit">
    <text evidence="5 6">Interacts with GCK; the interaction occurs preferentially at low glucose levels (PubMed:37616343). Interacts with the proteasome (PubMed:37616343).</text>
</comment>
<comment type="interaction">
    <interactant intactId="EBI-7153979">
        <id>Q504T8</id>
    </interactant>
    <interactant intactId="EBI-17278014">
        <id>Q8IZR5-2</id>
        <label>CMTM4</label>
    </interactant>
    <organismsDiffer>false</organismsDiffer>
    <experiments>3</experiments>
</comment>
<comment type="interaction">
    <interactant intactId="EBI-7153979">
        <id>Q504T8</id>
    </interactant>
    <interactant intactId="EBI-1047093">
        <id>O76011</id>
        <label>KRT34</label>
    </interactant>
    <organismsDiffer>false</organismsDiffer>
    <experiments>3</experiments>
</comment>
<comment type="interaction">
    <interactant intactId="EBI-7153979">
        <id>Q504T8</id>
    </interactant>
    <interactant intactId="EBI-742388">
        <id>Q9H8W4</id>
        <label>PLEKHF2</label>
    </interactant>
    <organismsDiffer>false</organismsDiffer>
    <experiments>3</experiments>
</comment>
<comment type="interaction">
    <interactant intactId="EBI-7153979">
        <id>Q504T8</id>
    </interactant>
    <interactant intactId="EBI-11321949">
        <id>O43761</id>
        <label>SYNGR3</label>
    </interactant>
    <organismsDiffer>false</organismsDiffer>
    <experiments>3</experiments>
</comment>
<comment type="subcellular location">
    <subcellularLocation>
        <location evidence="2">Nucleus</location>
        <location evidence="2">Nucleolus</location>
    </subcellularLocation>
    <subcellularLocation>
        <location evidence="5 6">Nucleus</location>
    </subcellularLocation>
    <subcellularLocation>
        <location evidence="5">Cytoplasm</location>
        <location evidence="5">Cytosol</location>
    </subcellularLocation>
    <text evidence="2 5">Detected in the nucleus and nucleolus with no expression in the cytoplasm (By similarity). However, a later study finds expression in the nucleus and cytoplasm with no expression in the nucleolus (PubMed:24187134).</text>
</comment>
<comment type="domain">
    <text evidence="6">Contains three domains that function in concert to promote proteasomal degradation of bound substrates. Contains a ubiquitin-like domain (Ubl) toward its N-terminus that is necessary to promote substrate degradation. In the middle, two domains termed Catch1 and Catch2 are necessary and sufficient to interact with unstructured regions within substrates. The long C-terminal region associates with the proteasome.</text>
</comment>
<evidence type="ECO:0000250" key="1">
    <source>
        <dbReference type="UniProtKB" id="D4AE48"/>
    </source>
</evidence>
<evidence type="ECO:0000250" key="2">
    <source>
        <dbReference type="UniProtKB" id="Q3TPJ7"/>
    </source>
</evidence>
<evidence type="ECO:0000255" key="3">
    <source>
        <dbReference type="PROSITE-ProRule" id="PRU00214"/>
    </source>
</evidence>
<evidence type="ECO:0000256" key="4">
    <source>
        <dbReference type="SAM" id="MobiDB-lite"/>
    </source>
</evidence>
<evidence type="ECO:0000269" key="5">
    <source>
    </source>
</evidence>
<evidence type="ECO:0000269" key="6">
    <source>
    </source>
</evidence>
<evidence type="ECO:0000305" key="7"/>
<reference key="1">
    <citation type="journal article" date="2004" name="Genome Res.">
        <title>The status, quality, and expansion of the NIH full-length cDNA project: the Mammalian Gene Collection (MGC).</title>
        <authorList>
            <consortium name="The MGC Project Team"/>
        </authorList>
    </citation>
    <scope>NUCLEOTIDE SEQUENCE [LARGE SCALE MRNA]</scope>
    <source>
        <tissue>Placenta</tissue>
    </source>
</reference>
<reference key="2">
    <citation type="journal article" date="2013" name="J. Biol. Chem.">
        <title>Identification of the ubiquitin-like domain of midnolin as a new glucokinase interaction partner.</title>
        <authorList>
            <person name="Hofmeister-Brix A."/>
            <person name="Kollmann K."/>
            <person name="Langer S."/>
            <person name="Schultz J."/>
            <person name="Lenzen S."/>
            <person name="Baltrusch S."/>
        </authorList>
    </citation>
    <scope>INTERACTION WITH GCK</scope>
    <scope>SUBCELLULAR LOCATION</scope>
</reference>
<reference key="3">
    <citation type="journal article" date="2023" name="Science">
        <title>The midnolin-proteasome pathway catches proteins for ubiquitination-independent degradation.</title>
        <authorList>
            <person name="Gu X."/>
            <person name="Nardone C."/>
            <person name="Kamitaki N."/>
            <person name="Mao A."/>
            <person name="Elledge S.J."/>
            <person name="Greenberg M.E."/>
        </authorList>
    </citation>
    <scope>FUNCTION</scope>
    <scope>SUBCELLULAR LOCATION</scope>
    <scope>DOMAIN</scope>
</reference>
<feature type="chain" id="PRO_0000287536" description="Midnolin">
    <location>
        <begin position="1"/>
        <end position="468"/>
    </location>
</feature>
<feature type="domain" description="Ubiquitin-like" evidence="3">
    <location>
        <begin position="31"/>
        <end position="105"/>
    </location>
</feature>
<feature type="region of interest" description="Disordered" evidence="4">
    <location>
        <begin position="182"/>
        <end position="264"/>
    </location>
</feature>
<feature type="region of interest" description="Disordered" evidence="4">
    <location>
        <begin position="404"/>
        <end position="447"/>
    </location>
</feature>
<feature type="compositionally biased region" description="Low complexity" evidence="4">
    <location>
        <begin position="185"/>
        <end position="201"/>
    </location>
</feature>
<feature type="compositionally biased region" description="Pro residues" evidence="4">
    <location>
        <begin position="202"/>
        <end position="213"/>
    </location>
</feature>
<feature type="compositionally biased region" description="Low complexity" evidence="4">
    <location>
        <begin position="237"/>
        <end position="260"/>
    </location>
</feature>
<feature type="compositionally biased region" description="Low complexity" evidence="4">
    <location>
        <begin position="419"/>
        <end position="431"/>
    </location>
</feature>
<feature type="sequence conflict" description="In Ref. 1; AAH94778." evidence="7" ref="1">
    <original>V</original>
    <variation>A</variation>
    <location>
        <position position="457"/>
    </location>
</feature>